<gene>
    <name type="primary">SLC6A19</name>
    <name type="synonym">B0AT1</name>
</gene>
<proteinExistence type="evidence at transcript level"/>
<name>S6A19_PONAB</name>
<reference key="1">
    <citation type="submission" date="2004-11" db="EMBL/GenBank/DDBJ databases">
        <authorList>
            <consortium name="The German cDNA consortium"/>
        </authorList>
    </citation>
    <scope>NUCLEOTIDE SEQUENCE [LARGE SCALE MRNA]</scope>
    <source>
        <tissue>Kidney</tissue>
    </source>
</reference>
<sequence length="634" mass="71102">MVRLVLPNPGLDTRILSLAELETIEQEEASSRPKWDNKAQYLLTCVGFCVGLGNVWRFPYLCQSHGGGAFMIPFLILLVLEGIPLLHLEFAIGQRLRRGSLGVWSSIHPALKGVGLTSMLVSFVVGLYYNTIISWIMWYLFNSFQEPLPWSECPLNENQTGYVDECARSSPVDYFWYRETLNISTSISDSGSIQWRMLLCLACAWSVLYMCTIRGIETTGKVVYITSTLPYVVLTIFLIRGLTLKGATKGIIYLFTPNVTELANPVTWLDAGAQVFFSFSLAFGGLISFSSYNSVHNNCERDSVIVSIINGFTSVYVAIVIYSIIGFRATQRYDDCFSTNILTLINGFDLPEGNVTQENFVEMQRQCNASNPAAYAQLVFQTCDINSFLSEGVEGTGLAFIVFTEAITKMPVSPLWSVLFFIMLFCLGLSSMFGNMEGVVVPLQDLKVIPPKWPKELLTGLICLGTFLIGFIFTLNSGQYWLSLLDSYAVSIPLLIIAFCEMFSVVYVYGVDRFNKDIEFMIGHKPNIFWQVTWRVVSPLLMLIILVFFFVVQVSQELTYSIWNPGYEEFPKSQKISHPNWVYAVVVIVAGVPSLTIPSYAIYKLIRNCCQKPGDRQGLVSTLSTASMNGDLKY</sequence>
<feature type="chain" id="PRO_0000214811" description="Sodium-dependent neutral amino acid transporter B(0)AT1">
    <location>
        <begin position="1"/>
        <end position="634"/>
    </location>
</feature>
<feature type="topological domain" description="Cytoplasmic" evidence="3">
    <location>
        <begin position="1"/>
        <end position="41"/>
    </location>
</feature>
<feature type="transmembrane region" description="Helical; Name=1" evidence="3">
    <location>
        <begin position="42"/>
        <end position="62"/>
    </location>
</feature>
<feature type="topological domain" description="Extracellular" evidence="3">
    <location>
        <begin position="63"/>
        <end position="65"/>
    </location>
</feature>
<feature type="transmembrane region" description="Helical; Name=2" evidence="3">
    <location>
        <begin position="66"/>
        <end position="86"/>
    </location>
</feature>
<feature type="topological domain" description="Cytoplasmic" evidence="3">
    <location>
        <begin position="87"/>
        <end position="120"/>
    </location>
</feature>
<feature type="transmembrane region" description="Helical; Name=3" evidence="3">
    <location>
        <begin position="121"/>
        <end position="141"/>
    </location>
</feature>
<feature type="topological domain" description="Extracellular" evidence="3">
    <location>
        <begin position="142"/>
        <end position="192"/>
    </location>
</feature>
<feature type="transmembrane region" description="Helical; Name=4" evidence="3">
    <location>
        <begin position="193"/>
        <end position="213"/>
    </location>
</feature>
<feature type="topological domain" description="Cytoplasmic" evidence="3">
    <location>
        <begin position="214"/>
        <end position="221"/>
    </location>
</feature>
<feature type="transmembrane region" description="Helical; Name=5" evidence="3">
    <location>
        <begin position="222"/>
        <end position="242"/>
    </location>
</feature>
<feature type="topological domain" description="Extracellular" evidence="3">
    <location>
        <begin position="243"/>
        <end position="268"/>
    </location>
</feature>
<feature type="transmembrane region" description="Helical; Name=6" evidence="3">
    <location>
        <begin position="269"/>
        <end position="289"/>
    </location>
</feature>
<feature type="topological domain" description="Cytoplasmic" evidence="3">
    <location>
        <begin position="290"/>
        <end position="304"/>
    </location>
</feature>
<feature type="transmembrane region" description="Helical; Name=7" evidence="3">
    <location>
        <begin position="305"/>
        <end position="325"/>
    </location>
</feature>
<feature type="topological domain" description="Extracellular" evidence="3">
    <location>
        <begin position="326"/>
        <end position="413"/>
    </location>
</feature>
<feature type="transmembrane region" description="Helical; Name=8" evidence="3">
    <location>
        <begin position="414"/>
        <end position="434"/>
    </location>
</feature>
<feature type="topological domain" description="Cytoplasmic" evidence="3">
    <location>
        <begin position="435"/>
        <end position="456"/>
    </location>
</feature>
<feature type="transmembrane region" description="Helical; Name=9" evidence="3">
    <location>
        <begin position="457"/>
        <end position="477"/>
    </location>
</feature>
<feature type="topological domain" description="Extracellular" evidence="3">
    <location>
        <begin position="478"/>
        <end position="487"/>
    </location>
</feature>
<feature type="transmembrane region" description="Helical; Name=10" evidence="3">
    <location>
        <begin position="488"/>
        <end position="508"/>
    </location>
</feature>
<feature type="topological domain" description="Cytoplasmic" evidence="3">
    <location>
        <begin position="509"/>
        <end position="531"/>
    </location>
</feature>
<feature type="transmembrane region" description="Helical; Name=11" evidence="3">
    <location>
        <begin position="532"/>
        <end position="552"/>
    </location>
</feature>
<feature type="topological domain" description="Extracellular" evidence="3">
    <location>
        <begin position="553"/>
        <end position="581"/>
    </location>
</feature>
<feature type="transmembrane region" description="Helical; Name=12" evidence="3">
    <location>
        <begin position="582"/>
        <end position="602"/>
    </location>
</feature>
<feature type="topological domain" description="Cytoplasmic" evidence="3">
    <location>
        <begin position="603"/>
        <end position="634"/>
    </location>
</feature>
<feature type="modified residue" description="Phosphoserine" evidence="2">
    <location>
        <position position="17"/>
    </location>
</feature>
<feature type="modified residue" description="Phosphoserine" evidence="2">
    <location>
        <position position="627"/>
    </location>
</feature>
<feature type="glycosylation site" description="N-linked (GlcNAc...) asparagine" evidence="3">
    <location>
        <position position="158"/>
    </location>
</feature>
<feature type="glycosylation site" description="N-linked (GlcNAc...) asparagine" evidence="3">
    <location>
        <position position="182"/>
    </location>
</feature>
<feature type="glycosylation site" description="N-linked (GlcNAc...) asparagine" evidence="3">
    <location>
        <position position="258"/>
    </location>
</feature>
<feature type="glycosylation site" description="N-linked (GlcNAc...) asparagine" evidence="3">
    <location>
        <position position="354"/>
    </location>
</feature>
<feature type="glycosylation site" description="N-linked (GlcNAc...) asparagine" evidence="3">
    <location>
        <position position="368"/>
    </location>
</feature>
<protein>
    <recommendedName>
        <fullName>Sodium-dependent neutral amino acid transporter B(0)AT1</fullName>
    </recommendedName>
    <alternativeName>
        <fullName>Solute carrier family 6 member 19</fullName>
    </alternativeName>
    <alternativeName>
        <fullName>System B(0) neutral amino acid transporter AT1</fullName>
    </alternativeName>
</protein>
<keyword id="KW-0029">Amino-acid transport</keyword>
<keyword id="KW-0325">Glycoprotein</keyword>
<keyword id="KW-0472">Membrane</keyword>
<keyword id="KW-0597">Phosphoprotein</keyword>
<keyword id="KW-1185">Reference proteome</keyword>
<keyword id="KW-0769">Symport</keyword>
<keyword id="KW-0812">Transmembrane</keyword>
<keyword id="KW-1133">Transmembrane helix</keyword>
<keyword id="KW-0813">Transport</keyword>
<dbReference type="EMBL" id="CR860498">
    <property type="protein sequence ID" value="CAH92619.1"/>
    <property type="molecule type" value="mRNA"/>
</dbReference>
<dbReference type="RefSeq" id="NP_001126535.1">
    <property type="nucleotide sequence ID" value="NM_001133063.1"/>
</dbReference>
<dbReference type="SMR" id="Q5R6J1"/>
<dbReference type="FunCoup" id="Q5R6J1">
    <property type="interactions" value="97"/>
</dbReference>
<dbReference type="STRING" id="9601.ENSPPYP00000017106"/>
<dbReference type="GlyCosmos" id="Q5R6J1">
    <property type="glycosylation" value="5 sites, No reported glycans"/>
</dbReference>
<dbReference type="GeneID" id="100173524"/>
<dbReference type="KEGG" id="pon:100173524"/>
<dbReference type="CTD" id="340024"/>
<dbReference type="InParanoid" id="Q5R6J1"/>
<dbReference type="OrthoDB" id="6581954at2759"/>
<dbReference type="Proteomes" id="UP000001595">
    <property type="component" value="Unplaced"/>
</dbReference>
<dbReference type="GO" id="GO:0016324">
    <property type="term" value="C:apical plasma membrane"/>
    <property type="evidence" value="ECO:0000250"/>
    <property type="project" value="UniProtKB"/>
</dbReference>
<dbReference type="GO" id="GO:0031526">
    <property type="term" value="C:brush border membrane"/>
    <property type="evidence" value="ECO:0007669"/>
    <property type="project" value="TreeGrafter"/>
</dbReference>
<dbReference type="GO" id="GO:0015175">
    <property type="term" value="F:neutral L-amino acid transmembrane transporter activity"/>
    <property type="evidence" value="ECO:0000250"/>
    <property type="project" value="UniProtKB"/>
</dbReference>
<dbReference type="GO" id="GO:0015293">
    <property type="term" value="F:symporter activity"/>
    <property type="evidence" value="ECO:0007669"/>
    <property type="project" value="UniProtKB-KW"/>
</dbReference>
<dbReference type="GO" id="GO:0035725">
    <property type="term" value="P:sodium ion transmembrane transport"/>
    <property type="evidence" value="ECO:0007669"/>
    <property type="project" value="TreeGrafter"/>
</dbReference>
<dbReference type="InterPro" id="IPR000175">
    <property type="entry name" value="Na/ntran_symport"/>
</dbReference>
<dbReference type="InterPro" id="IPR002438">
    <property type="entry name" value="Neutral_aa_SLC6"/>
</dbReference>
<dbReference type="InterPro" id="IPR037272">
    <property type="entry name" value="SNS_sf"/>
</dbReference>
<dbReference type="NCBIfam" id="NF037979">
    <property type="entry name" value="Na_transp"/>
    <property type="match status" value="1"/>
</dbReference>
<dbReference type="PANTHER" id="PTHR11616:SF125">
    <property type="entry name" value="SODIUM-DEPENDENT NEUTRAL AMINO ACID TRANSPORTER B(0)AT1"/>
    <property type="match status" value="1"/>
</dbReference>
<dbReference type="PANTHER" id="PTHR11616">
    <property type="entry name" value="SODIUM/CHLORIDE DEPENDENT TRANSPORTER"/>
    <property type="match status" value="1"/>
</dbReference>
<dbReference type="Pfam" id="PF00209">
    <property type="entry name" value="SNF"/>
    <property type="match status" value="1"/>
</dbReference>
<dbReference type="PRINTS" id="PR00176">
    <property type="entry name" value="NANEUSMPORT"/>
</dbReference>
<dbReference type="PRINTS" id="PR01206">
    <property type="entry name" value="ORPHTRNSPORT"/>
</dbReference>
<dbReference type="SUPFAM" id="SSF161070">
    <property type="entry name" value="SNF-like"/>
    <property type="match status" value="1"/>
</dbReference>
<dbReference type="PROSITE" id="PS00610">
    <property type="entry name" value="NA_NEUROTRAN_SYMP_1"/>
    <property type="match status" value="1"/>
</dbReference>
<dbReference type="PROSITE" id="PS50267">
    <property type="entry name" value="NA_NEUROTRAN_SYMP_3"/>
    <property type="match status" value="1"/>
</dbReference>
<organism>
    <name type="scientific">Pongo abelii</name>
    <name type="common">Sumatran orangutan</name>
    <name type="synonym">Pongo pygmaeus abelii</name>
    <dbReference type="NCBI Taxonomy" id="9601"/>
    <lineage>
        <taxon>Eukaryota</taxon>
        <taxon>Metazoa</taxon>
        <taxon>Chordata</taxon>
        <taxon>Craniata</taxon>
        <taxon>Vertebrata</taxon>
        <taxon>Euteleostomi</taxon>
        <taxon>Mammalia</taxon>
        <taxon>Eutheria</taxon>
        <taxon>Euarchontoglires</taxon>
        <taxon>Primates</taxon>
        <taxon>Haplorrhini</taxon>
        <taxon>Catarrhini</taxon>
        <taxon>Hominidae</taxon>
        <taxon>Pongo</taxon>
    </lineage>
</organism>
<accession>Q5R6J1</accession>
<evidence type="ECO:0000250" key="1">
    <source>
        <dbReference type="UniProtKB" id="Q695T7"/>
    </source>
</evidence>
<evidence type="ECO:0000250" key="2">
    <source>
        <dbReference type="UniProtKB" id="Q9D687"/>
    </source>
</evidence>
<evidence type="ECO:0000255" key="3"/>
<evidence type="ECO:0000305" key="4"/>
<comment type="function">
    <text evidence="2">Transporter that mediates resorption of neutral amino acids across the apical membrane of renal and intestinal epithelial cells. This uptake is sodium-dependent and chloride-independent. Requires CLTRN in kidney or ACE2 in intestine for cell surface expression and amino acid transporter activity.</text>
</comment>
<comment type="catalytic activity">
    <reaction evidence="1">
        <text>L-alanine(in) + Na(+)(in) = L-alanine(out) + Na(+)(out)</text>
        <dbReference type="Rhea" id="RHEA:29283"/>
        <dbReference type="ChEBI" id="CHEBI:29101"/>
        <dbReference type="ChEBI" id="CHEBI:57972"/>
    </reaction>
</comment>
<comment type="catalytic activity">
    <reaction evidence="1">
        <text>L-cysteine(in) + Na(+)(in) = L-cysteine(out) + Na(+)(out)</text>
        <dbReference type="Rhea" id="RHEA:68232"/>
        <dbReference type="ChEBI" id="CHEBI:29101"/>
        <dbReference type="ChEBI" id="CHEBI:35235"/>
    </reaction>
</comment>
<comment type="catalytic activity">
    <reaction evidence="1">
        <text>L-glutamine(in) + Na(+)(in) = L-glutamine(out) + Na(+)(out)</text>
        <dbReference type="Rhea" id="RHEA:68236"/>
        <dbReference type="ChEBI" id="CHEBI:29101"/>
        <dbReference type="ChEBI" id="CHEBI:58359"/>
    </reaction>
</comment>
<comment type="catalytic activity">
    <reaction evidence="1">
        <text>glycine(in) + Na(+)(in) = glycine(out) + Na(+)(out)</text>
        <dbReference type="Rhea" id="RHEA:68228"/>
        <dbReference type="ChEBI" id="CHEBI:29101"/>
        <dbReference type="ChEBI" id="CHEBI:57305"/>
    </reaction>
</comment>
<comment type="catalytic activity">
    <reaction evidence="1">
        <text>L-isoleucine(in) + Na(+)(in) = L-isoleucine(out) + Na(+)(out)</text>
        <dbReference type="Rhea" id="RHEA:29275"/>
        <dbReference type="ChEBI" id="CHEBI:29101"/>
        <dbReference type="ChEBI" id="CHEBI:58045"/>
    </reaction>
</comment>
<comment type="catalytic activity">
    <reaction evidence="1">
        <text>L-leucine(in) + Na(+)(in) = L-leucine(out) + Na(+)(out)</text>
        <dbReference type="Rhea" id="RHEA:29263"/>
        <dbReference type="ChEBI" id="CHEBI:29101"/>
        <dbReference type="ChEBI" id="CHEBI:57427"/>
    </reaction>
</comment>
<comment type="catalytic activity">
    <reaction evidence="1">
        <text>L-methionine(in) + Na(+)(in) = L-methionine(out) + Na(+)(out)</text>
        <dbReference type="Rhea" id="RHEA:68240"/>
        <dbReference type="ChEBI" id="CHEBI:29101"/>
        <dbReference type="ChEBI" id="CHEBI:57844"/>
    </reaction>
</comment>
<comment type="catalytic activity">
    <reaction evidence="1">
        <text>L-phenylalanine(in) + Na(+)(in) = L-phenylalanine(out) + Na(+)(out)</text>
        <dbReference type="Rhea" id="RHEA:68244"/>
        <dbReference type="ChEBI" id="CHEBI:29101"/>
        <dbReference type="ChEBI" id="CHEBI:58095"/>
    </reaction>
</comment>
<comment type="catalytic activity">
    <reaction evidence="1">
        <text>L-serine(in) + Na(+)(in) = L-serine(out) + Na(+)(out)</text>
        <dbReference type="Rhea" id="RHEA:29575"/>
        <dbReference type="ChEBI" id="CHEBI:29101"/>
        <dbReference type="ChEBI" id="CHEBI:33384"/>
    </reaction>
</comment>
<comment type="catalytic activity">
    <reaction evidence="1">
        <text>L-tryptophan(in) + Na(+)(in) = L-tryptophan(out) + Na(+)(out)</text>
        <dbReference type="Rhea" id="RHEA:68252"/>
        <dbReference type="ChEBI" id="CHEBI:29101"/>
        <dbReference type="ChEBI" id="CHEBI:57912"/>
    </reaction>
</comment>
<comment type="catalytic activity">
    <reaction evidence="1">
        <text>L-tyrosine(in) + Na(+)(in) = L-tyrosine(out) + Na(+)(out)</text>
        <dbReference type="Rhea" id="RHEA:68248"/>
        <dbReference type="ChEBI" id="CHEBI:29101"/>
        <dbReference type="ChEBI" id="CHEBI:58315"/>
    </reaction>
</comment>
<comment type="catalytic activity">
    <reaction evidence="1">
        <text>L-valine(in) + Na(+)(in) = L-valine(out) + Na(+)(out)</text>
        <dbReference type="Rhea" id="RHEA:29267"/>
        <dbReference type="ChEBI" id="CHEBI:29101"/>
        <dbReference type="ChEBI" id="CHEBI:57762"/>
    </reaction>
</comment>
<comment type="subunit">
    <text evidence="2">Interacts in a tissue-specific manner with ACE2 in small intestine and with CLTRN in the kidney. Interacts with CLTRN; this interaction is required for trafficking of SLC6A19 to the plasma membrane and for its catalytic activation in kidneys. Interacts with ACE2; this interaction is required for trafficking of SLC6A19 to the plasma membrane and for its catalytic activation in intestine. Interacts with ANPEP; the interaction positively regulates its amino acid transporter activity (By similarity).</text>
</comment>
<comment type="subcellular location">
    <subcellularLocation>
        <location evidence="1">Membrane</location>
        <topology evidence="3">Multi-pass membrane protein</topology>
    </subcellularLocation>
</comment>
<comment type="similarity">
    <text evidence="4">Belongs to the sodium:neurotransmitter symporter (SNF) (TC 2.A.22) family. SLC6A19 subfamily.</text>
</comment>